<protein>
    <recommendedName>
        <fullName evidence="1">Single-stranded DNA-binding protein 2</fullName>
        <shortName evidence="1">SSB 2</shortName>
    </recommendedName>
</protein>
<feature type="chain" id="PRO_0000096093" description="Single-stranded DNA-binding protein 2">
    <location>
        <begin position="1"/>
        <end position="172"/>
    </location>
</feature>
<feature type="domain" description="SSB" evidence="1">
    <location>
        <begin position="6"/>
        <end position="111"/>
    </location>
</feature>
<feature type="DNA-binding region" evidence="1">
    <location>
        <begin position="55"/>
        <end position="61"/>
    </location>
</feature>
<feature type="region of interest" description="Disordered" evidence="2">
    <location>
        <begin position="113"/>
        <end position="172"/>
    </location>
</feature>
<feature type="short sequence motif" description="Important for interaction with partner proteins" evidence="1">
    <location>
        <begin position="167"/>
        <end position="172"/>
    </location>
</feature>
<feature type="compositionally biased region" description="Low complexity" evidence="2">
    <location>
        <begin position="119"/>
        <end position="153"/>
    </location>
</feature>
<accession>Q93GP7</accession>
<dbReference type="EMBL" id="AE006471">
    <property type="protein sequence ID" value="AAL23474.1"/>
    <property type="molecule type" value="Genomic_DNA"/>
</dbReference>
<dbReference type="RefSeq" id="WP_000741240.1">
    <property type="nucleotide sequence ID" value="NC_003277.2"/>
</dbReference>
<dbReference type="SMR" id="Q93GP7"/>
<dbReference type="KEGG" id="stm:PSLT066"/>
<dbReference type="PATRIC" id="fig|99287.12.peg.4926"/>
<dbReference type="HOGENOM" id="CLU_078758_0_2_6"/>
<dbReference type="OMA" id="CFIDARL"/>
<dbReference type="PhylomeDB" id="Q93GP7"/>
<dbReference type="BioCyc" id="SENT99287:PSLT066-MONOMER"/>
<dbReference type="Proteomes" id="UP000001014">
    <property type="component" value="Plasmid pSLT"/>
</dbReference>
<dbReference type="GO" id="GO:0009295">
    <property type="term" value="C:nucleoid"/>
    <property type="evidence" value="ECO:0000318"/>
    <property type="project" value="GO_Central"/>
</dbReference>
<dbReference type="GO" id="GO:0008047">
    <property type="term" value="F:enzyme activator activity"/>
    <property type="evidence" value="ECO:0000318"/>
    <property type="project" value="GO_Central"/>
</dbReference>
<dbReference type="GO" id="GO:0003697">
    <property type="term" value="F:single-stranded DNA binding"/>
    <property type="evidence" value="ECO:0000318"/>
    <property type="project" value="GO_Central"/>
</dbReference>
<dbReference type="GO" id="GO:0006310">
    <property type="term" value="P:DNA recombination"/>
    <property type="evidence" value="ECO:0007669"/>
    <property type="project" value="UniProtKB-UniRule"/>
</dbReference>
<dbReference type="GO" id="GO:0006281">
    <property type="term" value="P:DNA repair"/>
    <property type="evidence" value="ECO:0007669"/>
    <property type="project" value="UniProtKB-UniRule"/>
</dbReference>
<dbReference type="GO" id="GO:0006260">
    <property type="term" value="P:DNA replication"/>
    <property type="evidence" value="ECO:0000318"/>
    <property type="project" value="GO_Central"/>
</dbReference>
<dbReference type="CDD" id="cd04496">
    <property type="entry name" value="SSB_OBF"/>
    <property type="match status" value="1"/>
</dbReference>
<dbReference type="Gene3D" id="2.40.50.140">
    <property type="entry name" value="Nucleic acid-binding proteins"/>
    <property type="match status" value="1"/>
</dbReference>
<dbReference type="HAMAP" id="MF_00984">
    <property type="entry name" value="SSB"/>
    <property type="match status" value="1"/>
</dbReference>
<dbReference type="InterPro" id="IPR012340">
    <property type="entry name" value="NA-bd_OB-fold"/>
</dbReference>
<dbReference type="InterPro" id="IPR000424">
    <property type="entry name" value="Primosome_PriB/ssb"/>
</dbReference>
<dbReference type="InterPro" id="IPR011344">
    <property type="entry name" value="ssDNA-bd"/>
</dbReference>
<dbReference type="NCBIfam" id="TIGR00621">
    <property type="entry name" value="ssb"/>
    <property type="match status" value="1"/>
</dbReference>
<dbReference type="PANTHER" id="PTHR10302">
    <property type="entry name" value="SINGLE-STRANDED DNA-BINDING PROTEIN"/>
    <property type="match status" value="1"/>
</dbReference>
<dbReference type="PANTHER" id="PTHR10302:SF27">
    <property type="entry name" value="SINGLE-STRANDED DNA-BINDING PROTEIN"/>
    <property type="match status" value="1"/>
</dbReference>
<dbReference type="Pfam" id="PF00436">
    <property type="entry name" value="SSB"/>
    <property type="match status" value="1"/>
</dbReference>
<dbReference type="SUPFAM" id="SSF50249">
    <property type="entry name" value="Nucleic acid-binding proteins"/>
    <property type="match status" value="1"/>
</dbReference>
<dbReference type="PROSITE" id="PS50935">
    <property type="entry name" value="SSB"/>
    <property type="match status" value="1"/>
</dbReference>
<reference key="1">
    <citation type="journal article" date="2001" name="Nature">
        <title>Complete genome sequence of Salmonella enterica serovar Typhimurium LT2.</title>
        <authorList>
            <person name="McClelland M."/>
            <person name="Sanderson K.E."/>
            <person name="Spieth J."/>
            <person name="Clifton S.W."/>
            <person name="Latreille P."/>
            <person name="Courtney L."/>
            <person name="Porwollik S."/>
            <person name="Ali J."/>
            <person name="Dante M."/>
            <person name="Du F."/>
            <person name="Hou S."/>
            <person name="Layman D."/>
            <person name="Leonard S."/>
            <person name="Nguyen C."/>
            <person name="Scott K."/>
            <person name="Holmes A."/>
            <person name="Grewal N."/>
            <person name="Mulvaney E."/>
            <person name="Ryan E."/>
            <person name="Sun H."/>
            <person name="Florea L."/>
            <person name="Miller W."/>
            <person name="Stoneking T."/>
            <person name="Nhan M."/>
            <person name="Waterston R."/>
            <person name="Wilson R.K."/>
        </authorList>
    </citation>
    <scope>NUCLEOTIDE SEQUENCE [LARGE SCALE GENOMIC DNA]</scope>
    <source>
        <strain>LT2 / SGSC1412 / ATCC 700720</strain>
    </source>
</reference>
<sequence>MAARGVNKVILVGHIGQDPEVRYMPNGGAVANLTLATSETWRVRQDGEMREHTEWHRVVVFGKLAEIASEYLRKGAQVYIEGQLRTRKWTDQSGQDKYTTEVIVNVGGTMQMLGRHNSQPQQEPQTPPTAAKGEGKAVKGAGNAAKGKNAAAPQQPPAQPDPAYDFDDDIPF</sequence>
<gene>
    <name type="primary">ssb2</name>
    <name type="ordered locus">PSLT066</name>
</gene>
<name>SSB2_SALTY</name>
<organism>
    <name type="scientific">Salmonella typhimurium (strain LT2 / SGSC1412 / ATCC 700720)</name>
    <dbReference type="NCBI Taxonomy" id="99287"/>
    <lineage>
        <taxon>Bacteria</taxon>
        <taxon>Pseudomonadati</taxon>
        <taxon>Pseudomonadota</taxon>
        <taxon>Gammaproteobacteria</taxon>
        <taxon>Enterobacterales</taxon>
        <taxon>Enterobacteriaceae</taxon>
        <taxon>Salmonella</taxon>
    </lineage>
</organism>
<proteinExistence type="inferred from homology"/>
<keyword id="KW-0227">DNA damage</keyword>
<keyword id="KW-0233">DNA recombination</keyword>
<keyword id="KW-0234">DNA repair</keyword>
<keyword id="KW-0235">DNA replication</keyword>
<keyword id="KW-0238">DNA-binding</keyword>
<keyword id="KW-0614">Plasmid</keyword>
<keyword id="KW-1185">Reference proteome</keyword>
<comment type="function">
    <text evidence="1">Plays an important role in DNA replication, recombination and repair. Binds to ssDNA and to an array of partner proteins to recruit them to their sites of action during DNA metabolism.</text>
</comment>
<comment type="subunit">
    <text evidence="1">Homotetramer.</text>
</comment>
<evidence type="ECO:0000255" key="1">
    <source>
        <dbReference type="HAMAP-Rule" id="MF_00984"/>
    </source>
</evidence>
<evidence type="ECO:0000256" key="2">
    <source>
        <dbReference type="SAM" id="MobiDB-lite"/>
    </source>
</evidence>
<geneLocation type="plasmid">
    <name>pSLT</name>
</geneLocation>